<name>PDRG1_RAT</name>
<gene>
    <name type="primary">Pdrg1</name>
</gene>
<keyword id="KW-0143">Chaperone</keyword>
<keyword id="KW-0963">Cytoplasm</keyword>
<keyword id="KW-1185">Reference proteome</keyword>
<comment type="function">
    <text evidence="2">May play a role in chaperone-mediated protein folding.</text>
</comment>
<comment type="subunit">
    <text evidence="1">Component of the PAQosome complex which is responsible for the biogenesis of several protein complexes and which consists of R2TP complex members RUVBL1, RUVBL2, RPAP3 and PIH1D1, URI complex members PFDN2, PFDN6, PDRG1, UXT and URI1 as well as ASDURF, POLR2E and DNAAF10/WDR92.</text>
</comment>
<comment type="subcellular location">
    <subcellularLocation>
        <location evidence="2">Cytoplasm</location>
    </subcellularLocation>
</comment>
<comment type="similarity">
    <text evidence="2">Belongs to the prefoldin subunit beta family.</text>
</comment>
<sequence length="133" mass="15392">MVSPEADRVLRYLVEVEELAEAVLSDKRQIVDLDTKRNQNREGLRALQKDPSVSEDVMVCFGNMFIKMPHLKTKEMIQKDQEHLDKEIERLRSQLKVKVNRLLEAQGKPELKGFNLNPLNQDELKALQVILKG</sequence>
<organism>
    <name type="scientific">Rattus norvegicus</name>
    <name type="common">Rat</name>
    <dbReference type="NCBI Taxonomy" id="10116"/>
    <lineage>
        <taxon>Eukaryota</taxon>
        <taxon>Metazoa</taxon>
        <taxon>Chordata</taxon>
        <taxon>Craniata</taxon>
        <taxon>Vertebrata</taxon>
        <taxon>Euteleostomi</taxon>
        <taxon>Mammalia</taxon>
        <taxon>Eutheria</taxon>
        <taxon>Euarchontoglires</taxon>
        <taxon>Glires</taxon>
        <taxon>Rodentia</taxon>
        <taxon>Myomorpha</taxon>
        <taxon>Muroidea</taxon>
        <taxon>Muridae</taxon>
        <taxon>Murinae</taxon>
        <taxon>Rattus</taxon>
    </lineage>
</organism>
<reference key="1">
    <citation type="journal article" date="2004" name="Genome Res.">
        <title>The status, quality, and expansion of the NIH full-length cDNA project: the Mammalian Gene Collection (MGC).</title>
        <authorList>
            <consortium name="The MGC Project Team"/>
        </authorList>
    </citation>
    <scope>NUCLEOTIDE SEQUENCE [LARGE SCALE MRNA]</scope>
    <source>
        <tissue>Kidney</tissue>
    </source>
</reference>
<dbReference type="EMBL" id="BC082021">
    <property type="protein sequence ID" value="AAH82021.2"/>
    <property type="molecule type" value="mRNA"/>
</dbReference>
<dbReference type="RefSeq" id="NP_001014762.1">
    <property type="nucleotide sequence ID" value="NM_001014762.1"/>
</dbReference>
<dbReference type="SMR" id="Q642A0"/>
<dbReference type="BioGRID" id="255302">
    <property type="interactions" value="3"/>
</dbReference>
<dbReference type="FunCoup" id="Q642A0">
    <property type="interactions" value="404"/>
</dbReference>
<dbReference type="STRING" id="10116.ENSRNOP00000012142"/>
<dbReference type="PhosphoSitePlus" id="Q642A0"/>
<dbReference type="PaxDb" id="10116-ENSRNOP00000012142"/>
<dbReference type="GeneID" id="296278"/>
<dbReference type="KEGG" id="rno:296278"/>
<dbReference type="UCSC" id="RGD:1305096">
    <property type="organism name" value="rat"/>
</dbReference>
<dbReference type="AGR" id="RGD:1305096"/>
<dbReference type="CTD" id="81572"/>
<dbReference type="RGD" id="1305096">
    <property type="gene designation" value="Pdrg1"/>
</dbReference>
<dbReference type="eggNOG" id="ENOG502S6V9">
    <property type="taxonomic scope" value="Eukaryota"/>
</dbReference>
<dbReference type="HOGENOM" id="CLU_132161_0_0_1"/>
<dbReference type="InParanoid" id="Q642A0"/>
<dbReference type="OrthoDB" id="20282at2759"/>
<dbReference type="PhylomeDB" id="Q642A0"/>
<dbReference type="TreeFam" id="TF329240"/>
<dbReference type="PRO" id="PR:Q642A0"/>
<dbReference type="Proteomes" id="UP000002494">
    <property type="component" value="Chromosome 3"/>
</dbReference>
<dbReference type="Bgee" id="ENSRNOG00000008845">
    <property type="expression patterns" value="Expressed in skeletal muscle tissue and 20 other cell types or tissues"/>
</dbReference>
<dbReference type="GO" id="GO:0005737">
    <property type="term" value="C:cytoplasm"/>
    <property type="evidence" value="ECO:0007669"/>
    <property type="project" value="UniProtKB-SubCell"/>
</dbReference>
<dbReference type="GO" id="GO:0016272">
    <property type="term" value="C:prefoldin complex"/>
    <property type="evidence" value="ECO:0007669"/>
    <property type="project" value="InterPro"/>
</dbReference>
<dbReference type="GO" id="GO:1990062">
    <property type="term" value="C:RPAP3/R2TP/prefoldin-like complex"/>
    <property type="evidence" value="ECO:0000266"/>
    <property type="project" value="RGD"/>
</dbReference>
<dbReference type="GO" id="GO:0051082">
    <property type="term" value="F:unfolded protein binding"/>
    <property type="evidence" value="ECO:0007669"/>
    <property type="project" value="InterPro"/>
</dbReference>
<dbReference type="GO" id="GO:0006457">
    <property type="term" value="P:protein folding"/>
    <property type="evidence" value="ECO:0007669"/>
    <property type="project" value="InterPro"/>
</dbReference>
<dbReference type="CDD" id="cd22860">
    <property type="entry name" value="PDRG1"/>
    <property type="match status" value="1"/>
</dbReference>
<dbReference type="InterPro" id="IPR030482">
    <property type="entry name" value="PDRG1"/>
</dbReference>
<dbReference type="InterPro" id="IPR002777">
    <property type="entry name" value="PFD_beta-like"/>
</dbReference>
<dbReference type="PANTHER" id="PTHR21162">
    <property type="entry name" value="P53 AND DNA DAMAGE-REGULATED PROTEIN"/>
    <property type="match status" value="1"/>
</dbReference>
<dbReference type="PANTHER" id="PTHR21162:SF0">
    <property type="entry name" value="P53 AND DNA DAMAGE-REGULATED PROTEIN 1"/>
    <property type="match status" value="1"/>
</dbReference>
<dbReference type="Pfam" id="PF01920">
    <property type="entry name" value="Prefoldin_2"/>
    <property type="match status" value="1"/>
</dbReference>
<dbReference type="SUPFAM" id="SSF46579">
    <property type="entry name" value="Prefoldin"/>
    <property type="match status" value="1"/>
</dbReference>
<evidence type="ECO:0000250" key="1">
    <source>
        <dbReference type="UniProtKB" id="Q9NUG6"/>
    </source>
</evidence>
<evidence type="ECO:0000305" key="2"/>
<accession>Q642A0</accession>
<proteinExistence type="evidence at transcript level"/>
<protein>
    <recommendedName>
        <fullName>p53 and DNA damage-regulated protein 1</fullName>
    </recommendedName>
</protein>
<feature type="chain" id="PRO_0000252491" description="p53 and DNA damage-regulated protein 1">
    <location>
        <begin position="1"/>
        <end position="133"/>
    </location>
</feature>